<dbReference type="EC" id="2.7.8.26" evidence="1"/>
<dbReference type="EMBL" id="CP000094">
    <property type="protein sequence ID" value="ABA73393.1"/>
    <property type="molecule type" value="Genomic_DNA"/>
</dbReference>
<dbReference type="RefSeq" id="WP_011333147.1">
    <property type="nucleotide sequence ID" value="NC_007492.2"/>
</dbReference>
<dbReference type="KEGG" id="pfo:Pfl01_1650"/>
<dbReference type="eggNOG" id="COG0368">
    <property type="taxonomic scope" value="Bacteria"/>
</dbReference>
<dbReference type="HOGENOM" id="CLU_057426_3_1_6"/>
<dbReference type="UniPathway" id="UPA00148">
    <property type="reaction ID" value="UER00238"/>
</dbReference>
<dbReference type="Proteomes" id="UP000002704">
    <property type="component" value="Chromosome"/>
</dbReference>
<dbReference type="GO" id="GO:0005886">
    <property type="term" value="C:plasma membrane"/>
    <property type="evidence" value="ECO:0007669"/>
    <property type="project" value="UniProtKB-SubCell"/>
</dbReference>
<dbReference type="GO" id="GO:0051073">
    <property type="term" value="F:adenosylcobinamide-GDP ribazoletransferase activity"/>
    <property type="evidence" value="ECO:0007669"/>
    <property type="project" value="UniProtKB-UniRule"/>
</dbReference>
<dbReference type="GO" id="GO:0008818">
    <property type="term" value="F:cobalamin 5'-phosphate synthase activity"/>
    <property type="evidence" value="ECO:0007669"/>
    <property type="project" value="UniProtKB-UniRule"/>
</dbReference>
<dbReference type="GO" id="GO:0009236">
    <property type="term" value="P:cobalamin biosynthetic process"/>
    <property type="evidence" value="ECO:0007669"/>
    <property type="project" value="UniProtKB-UniRule"/>
</dbReference>
<dbReference type="HAMAP" id="MF_00719">
    <property type="entry name" value="CobS"/>
    <property type="match status" value="1"/>
</dbReference>
<dbReference type="InterPro" id="IPR003805">
    <property type="entry name" value="CobS"/>
</dbReference>
<dbReference type="NCBIfam" id="TIGR00317">
    <property type="entry name" value="cobS"/>
    <property type="match status" value="1"/>
</dbReference>
<dbReference type="NCBIfam" id="NF001278">
    <property type="entry name" value="PRK00235.1-5"/>
    <property type="match status" value="1"/>
</dbReference>
<dbReference type="PANTHER" id="PTHR34148">
    <property type="entry name" value="ADENOSYLCOBINAMIDE-GDP RIBAZOLETRANSFERASE"/>
    <property type="match status" value="1"/>
</dbReference>
<dbReference type="PANTHER" id="PTHR34148:SF1">
    <property type="entry name" value="ADENOSYLCOBINAMIDE-GDP RIBAZOLETRANSFERASE"/>
    <property type="match status" value="1"/>
</dbReference>
<dbReference type="Pfam" id="PF02654">
    <property type="entry name" value="CobS"/>
    <property type="match status" value="1"/>
</dbReference>
<protein>
    <recommendedName>
        <fullName evidence="1">Adenosylcobinamide-GDP ribazoletransferase</fullName>
        <ecNumber evidence="1">2.7.8.26</ecNumber>
    </recommendedName>
    <alternativeName>
        <fullName evidence="1">Cobalamin synthase</fullName>
    </alternativeName>
    <alternativeName>
        <fullName evidence="1">Cobalamin-5'-phosphate synthase</fullName>
    </alternativeName>
</protein>
<accession>Q3KFR3</accession>
<gene>
    <name evidence="1" type="primary">cobS</name>
    <name type="ordered locus">Pfl01_1650</name>
</gene>
<proteinExistence type="inferred from homology"/>
<name>COBS_PSEPF</name>
<feature type="chain" id="PRO_1000045792" description="Adenosylcobinamide-GDP ribazoletransferase">
    <location>
        <begin position="1"/>
        <end position="243"/>
    </location>
</feature>
<feature type="transmembrane region" description="Helical" evidence="1">
    <location>
        <begin position="31"/>
        <end position="51"/>
    </location>
</feature>
<feature type="transmembrane region" description="Helical" evidence="1">
    <location>
        <begin position="57"/>
        <end position="77"/>
    </location>
</feature>
<feature type="transmembrane region" description="Helical" evidence="1">
    <location>
        <begin position="109"/>
        <end position="129"/>
    </location>
</feature>
<feature type="transmembrane region" description="Helical" evidence="1">
    <location>
        <begin position="135"/>
        <end position="155"/>
    </location>
</feature>
<feature type="transmembrane region" description="Helical" evidence="1">
    <location>
        <begin position="188"/>
        <end position="208"/>
    </location>
</feature>
<sequence length="243" mass="25783">MLPLWIALQFLGSLPIRLPGMPTPEQLGRSLLFYPLVGLLFGVILWALNIALAGTPLLLHAALLLAVWVLLSGALHLDGLADSADAWLGGFGDRERTLTIMKDPRSGPIAVVTLVLVLLLKFAALLALIEQQQSMALIIVPLIGRAALLGLFLTTSYVRAGGLGQALADHLPRKTGWQVLAVSAAVCLVIAGFNAVVALLLAVIVFIWLRHLMVRRLGGTTGDTAGALLELLEMSVLVGLALF</sequence>
<organism>
    <name type="scientific">Pseudomonas fluorescens (strain Pf0-1)</name>
    <dbReference type="NCBI Taxonomy" id="205922"/>
    <lineage>
        <taxon>Bacteria</taxon>
        <taxon>Pseudomonadati</taxon>
        <taxon>Pseudomonadota</taxon>
        <taxon>Gammaproteobacteria</taxon>
        <taxon>Pseudomonadales</taxon>
        <taxon>Pseudomonadaceae</taxon>
        <taxon>Pseudomonas</taxon>
    </lineage>
</organism>
<keyword id="KW-0997">Cell inner membrane</keyword>
<keyword id="KW-1003">Cell membrane</keyword>
<keyword id="KW-0169">Cobalamin biosynthesis</keyword>
<keyword id="KW-0460">Magnesium</keyword>
<keyword id="KW-0472">Membrane</keyword>
<keyword id="KW-0808">Transferase</keyword>
<keyword id="KW-0812">Transmembrane</keyword>
<keyword id="KW-1133">Transmembrane helix</keyword>
<evidence type="ECO:0000255" key="1">
    <source>
        <dbReference type="HAMAP-Rule" id="MF_00719"/>
    </source>
</evidence>
<reference key="1">
    <citation type="journal article" date="2009" name="Genome Biol.">
        <title>Genomic and genetic analyses of diversity and plant interactions of Pseudomonas fluorescens.</title>
        <authorList>
            <person name="Silby M.W."/>
            <person name="Cerdeno-Tarraga A.M."/>
            <person name="Vernikos G.S."/>
            <person name="Giddens S.R."/>
            <person name="Jackson R.W."/>
            <person name="Preston G.M."/>
            <person name="Zhang X.-X."/>
            <person name="Moon C.D."/>
            <person name="Gehrig S.M."/>
            <person name="Godfrey S.A.C."/>
            <person name="Knight C.G."/>
            <person name="Malone J.G."/>
            <person name="Robinson Z."/>
            <person name="Spiers A.J."/>
            <person name="Harris S."/>
            <person name="Challis G.L."/>
            <person name="Yaxley A.M."/>
            <person name="Harris D."/>
            <person name="Seeger K."/>
            <person name="Murphy L."/>
            <person name="Rutter S."/>
            <person name="Squares R."/>
            <person name="Quail M.A."/>
            <person name="Saunders E."/>
            <person name="Mavromatis K."/>
            <person name="Brettin T.S."/>
            <person name="Bentley S.D."/>
            <person name="Hothersall J."/>
            <person name="Stephens E."/>
            <person name="Thomas C.M."/>
            <person name="Parkhill J."/>
            <person name="Levy S.B."/>
            <person name="Rainey P.B."/>
            <person name="Thomson N.R."/>
        </authorList>
    </citation>
    <scope>NUCLEOTIDE SEQUENCE [LARGE SCALE GENOMIC DNA]</scope>
    <source>
        <strain>Pf0-1</strain>
    </source>
</reference>
<comment type="function">
    <text evidence="1">Joins adenosylcobinamide-GDP and alpha-ribazole to generate adenosylcobalamin (Ado-cobalamin). Also synthesizes adenosylcobalamin 5'-phosphate from adenosylcobinamide-GDP and alpha-ribazole 5'-phosphate.</text>
</comment>
<comment type="catalytic activity">
    <reaction evidence="1">
        <text>alpha-ribazole + adenosylcob(III)inamide-GDP = adenosylcob(III)alamin + GMP + H(+)</text>
        <dbReference type="Rhea" id="RHEA:16049"/>
        <dbReference type="ChEBI" id="CHEBI:10329"/>
        <dbReference type="ChEBI" id="CHEBI:15378"/>
        <dbReference type="ChEBI" id="CHEBI:18408"/>
        <dbReference type="ChEBI" id="CHEBI:58115"/>
        <dbReference type="ChEBI" id="CHEBI:60487"/>
        <dbReference type="EC" id="2.7.8.26"/>
    </reaction>
</comment>
<comment type="catalytic activity">
    <reaction evidence="1">
        <text>alpha-ribazole 5'-phosphate + adenosylcob(III)inamide-GDP = adenosylcob(III)alamin 5'-phosphate + GMP + H(+)</text>
        <dbReference type="Rhea" id="RHEA:23560"/>
        <dbReference type="ChEBI" id="CHEBI:15378"/>
        <dbReference type="ChEBI" id="CHEBI:57918"/>
        <dbReference type="ChEBI" id="CHEBI:58115"/>
        <dbReference type="ChEBI" id="CHEBI:60487"/>
        <dbReference type="ChEBI" id="CHEBI:60493"/>
        <dbReference type="EC" id="2.7.8.26"/>
    </reaction>
</comment>
<comment type="cofactor">
    <cofactor evidence="1">
        <name>Mg(2+)</name>
        <dbReference type="ChEBI" id="CHEBI:18420"/>
    </cofactor>
</comment>
<comment type="pathway">
    <text evidence="1">Cofactor biosynthesis; adenosylcobalamin biosynthesis; adenosylcobalamin from cob(II)yrinate a,c-diamide: step 7/7.</text>
</comment>
<comment type="subcellular location">
    <subcellularLocation>
        <location evidence="1">Cell inner membrane</location>
        <topology evidence="1">Multi-pass membrane protein</topology>
    </subcellularLocation>
</comment>
<comment type="similarity">
    <text evidence="1">Belongs to the CobS family.</text>
</comment>